<organism>
    <name type="scientific">Bacillus subtilis (strain 168)</name>
    <dbReference type="NCBI Taxonomy" id="224308"/>
    <lineage>
        <taxon>Bacteria</taxon>
        <taxon>Bacillati</taxon>
        <taxon>Bacillota</taxon>
        <taxon>Bacilli</taxon>
        <taxon>Bacillales</taxon>
        <taxon>Bacillaceae</taxon>
        <taxon>Bacillus</taxon>
    </lineage>
</organism>
<name>BCEB_BACSU</name>
<feature type="chain" id="PRO_0000064868" description="Bacitracin export permease protein BceB">
    <location>
        <begin position="1"/>
        <end position="646"/>
    </location>
</feature>
<feature type="transmembrane region" description="Helical" evidence="1">
    <location>
        <begin position="18"/>
        <end position="38"/>
    </location>
</feature>
<feature type="transmembrane region" description="Helical" evidence="1">
    <location>
        <begin position="60"/>
        <end position="80"/>
    </location>
</feature>
<feature type="transmembrane region" description="Helical" evidence="1">
    <location>
        <begin position="115"/>
        <end position="135"/>
    </location>
</feature>
<feature type="transmembrane region" description="Helical" evidence="1">
    <location>
        <begin position="152"/>
        <end position="172"/>
    </location>
</feature>
<feature type="transmembrane region" description="Helical" evidence="1">
    <location>
        <begin position="197"/>
        <end position="217"/>
    </location>
</feature>
<feature type="transmembrane region" description="Helical" evidence="1">
    <location>
        <begin position="232"/>
        <end position="252"/>
    </location>
</feature>
<feature type="transmembrane region" description="Helical" evidence="1">
    <location>
        <begin position="290"/>
        <end position="310"/>
    </location>
</feature>
<feature type="transmembrane region" description="Helical" evidence="1">
    <location>
        <begin position="526"/>
        <end position="546"/>
    </location>
</feature>
<feature type="transmembrane region" description="Helical" evidence="1">
    <location>
        <begin position="588"/>
        <end position="608"/>
    </location>
</feature>
<feature type="transmembrane region" description="Helical" evidence="1">
    <location>
        <begin position="616"/>
        <end position="636"/>
    </location>
</feature>
<feature type="helix" evidence="9">
    <location>
        <begin position="3"/>
        <end position="14"/>
    </location>
</feature>
<feature type="helix" evidence="9">
    <location>
        <begin position="15"/>
        <end position="17"/>
    </location>
</feature>
<feature type="helix" evidence="9">
    <location>
        <begin position="20"/>
        <end position="36"/>
    </location>
</feature>
<feature type="turn" evidence="9">
    <location>
        <begin position="37"/>
        <end position="40"/>
    </location>
</feature>
<feature type="helix" evidence="9">
    <location>
        <begin position="42"/>
        <end position="46"/>
    </location>
</feature>
<feature type="strand" evidence="6">
    <location>
        <begin position="49"/>
        <end position="51"/>
    </location>
</feature>
<feature type="strand" evidence="9">
    <location>
        <begin position="53"/>
        <end position="55"/>
    </location>
</feature>
<feature type="helix" evidence="9">
    <location>
        <begin position="56"/>
        <end position="81"/>
    </location>
</feature>
<feature type="helix" evidence="9">
    <location>
        <begin position="85"/>
        <end position="93"/>
    </location>
</feature>
<feature type="helix" evidence="9">
    <location>
        <begin position="97"/>
        <end position="105"/>
    </location>
</feature>
<feature type="helix" evidence="9">
    <location>
        <begin position="108"/>
        <end position="125"/>
    </location>
</feature>
<feature type="helix" evidence="9">
    <location>
        <begin position="127"/>
        <end position="137"/>
    </location>
</feature>
<feature type="helix" evidence="9">
    <location>
        <begin position="150"/>
        <end position="176"/>
    </location>
</feature>
<feature type="helix" evidence="9">
    <location>
        <begin position="180"/>
        <end position="183"/>
    </location>
</feature>
<feature type="helix" evidence="9">
    <location>
        <begin position="199"/>
        <end position="222"/>
    </location>
</feature>
<feature type="turn" evidence="9">
    <location>
        <begin position="223"/>
        <end position="225"/>
    </location>
</feature>
<feature type="helix" evidence="9">
    <location>
        <begin position="230"/>
        <end position="266"/>
    </location>
</feature>
<feature type="helix" evidence="9">
    <location>
        <begin position="273"/>
        <end position="285"/>
    </location>
</feature>
<feature type="helix" evidence="9">
    <location>
        <begin position="286"/>
        <end position="288"/>
    </location>
</feature>
<feature type="helix" evidence="9">
    <location>
        <begin position="291"/>
        <end position="315"/>
    </location>
</feature>
<feature type="helix" evidence="9">
    <location>
        <begin position="317"/>
        <end position="324"/>
    </location>
</feature>
<feature type="strand" evidence="9">
    <location>
        <begin position="325"/>
        <end position="330"/>
    </location>
</feature>
<feature type="helix" evidence="9">
    <location>
        <begin position="334"/>
        <end position="347"/>
    </location>
</feature>
<feature type="strand" evidence="6">
    <location>
        <begin position="359"/>
        <end position="364"/>
    </location>
</feature>
<feature type="turn" evidence="9">
    <location>
        <begin position="366"/>
        <end position="368"/>
    </location>
</feature>
<feature type="helix" evidence="6">
    <location>
        <begin position="380"/>
        <end position="382"/>
    </location>
</feature>
<feature type="strand" evidence="6">
    <location>
        <begin position="383"/>
        <end position="388"/>
    </location>
</feature>
<feature type="turn" evidence="9">
    <location>
        <begin position="390"/>
        <end position="392"/>
    </location>
</feature>
<feature type="strand" evidence="9">
    <location>
        <begin position="403"/>
        <end position="406"/>
    </location>
</feature>
<feature type="helix" evidence="9">
    <location>
        <begin position="410"/>
        <end position="415"/>
    </location>
</feature>
<feature type="strand" evidence="9">
    <location>
        <begin position="425"/>
        <end position="427"/>
    </location>
</feature>
<feature type="strand" evidence="9">
    <location>
        <begin position="436"/>
        <end position="441"/>
    </location>
</feature>
<feature type="helix" evidence="9">
    <location>
        <begin position="448"/>
        <end position="451"/>
    </location>
</feature>
<feature type="turn" evidence="7">
    <location>
        <begin position="452"/>
        <end position="454"/>
    </location>
</feature>
<feature type="strand" evidence="9">
    <location>
        <begin position="457"/>
        <end position="459"/>
    </location>
</feature>
<feature type="helix" evidence="9">
    <location>
        <begin position="462"/>
        <end position="471"/>
    </location>
</feature>
<feature type="strand" evidence="9">
    <location>
        <begin position="474"/>
        <end position="476"/>
    </location>
</feature>
<feature type="strand" evidence="9">
    <location>
        <begin position="479"/>
        <end position="482"/>
    </location>
</feature>
<feature type="strand" evidence="9">
    <location>
        <begin position="490"/>
        <end position="493"/>
    </location>
</feature>
<feature type="helix" evidence="9">
    <location>
        <begin position="494"/>
        <end position="504"/>
    </location>
</feature>
<feature type="strand" evidence="8">
    <location>
        <begin position="506"/>
        <end position="508"/>
    </location>
</feature>
<feature type="strand" evidence="9">
    <location>
        <begin position="510"/>
        <end position="512"/>
    </location>
</feature>
<feature type="helix" evidence="9">
    <location>
        <begin position="513"/>
        <end position="553"/>
    </location>
</feature>
<feature type="helix" evidence="9">
    <location>
        <begin position="558"/>
        <end position="562"/>
    </location>
</feature>
<feature type="turn" evidence="9">
    <location>
        <begin position="563"/>
        <end position="567"/>
    </location>
</feature>
<feature type="helix" evidence="9">
    <location>
        <begin position="571"/>
        <end position="602"/>
    </location>
</feature>
<feature type="helix" evidence="9">
    <location>
        <begin position="604"/>
        <end position="607"/>
    </location>
</feature>
<feature type="strand" evidence="9">
    <location>
        <begin position="608"/>
        <end position="610"/>
    </location>
</feature>
<feature type="helix" evidence="9">
    <location>
        <begin position="614"/>
        <end position="643"/>
    </location>
</feature>
<accession>O34741</accession>
<sequence>MNINQLILRNLKKNLRNYYLYVFALIFSVALYFAFVTLQYDPAINEVKASIKGAAAIKTASILLVAVVAIFILYANTIFIKRRSKEIGLFQLIGMTKHKIFRILSAENVMLYFGSLAIGVAAGFSISKLVLMILFKIVDVKADAKLHFSEQALVQTVIVFCGIYLLIMIMNYTFIKKQSILSLFKVTSSTEDKVKKISFFQMLIGALGIVLILTGYYVSSELFGGKFKTINELFVAMSFILGSVIIGTFLFYKGSVTFISNIIRKSKGGYLNISEVLSLSSIMFRMKSNALLLTIITTVSALAIGLLSLAYISYYSSEKTAEQNVAADFSFMNEKDAKLFENKLRESNISFVKKATPVLQANVDIANIMDGTPKEMQGDPGNMQLAVVSDKDVKGVDVAAGEAVFSGYTDLLQKIMVFKDSGVIKVKSKHETQPLKYKGLREEFLVSYTFTSGGMPAVIVDDSLFKQLDKDKDPRIQLAQSTFIGVNVKHDDQMEKANELFQQVNKKNEHLSRLDTSAAQKSLFGMVMFIVGFLGLTFLITSGCILYFKQMGESEDEKPSYTILRKLGFTQGDLIKGIRIKQMYNFGIPLVVGLFHSYFAVQSGWFLFGSEVWAPMIMVMVLYTALYSIFGFLSVLYYKKVIKSSL</sequence>
<dbReference type="EMBL" id="AF008220">
    <property type="protein sequence ID" value="AAC00256.1"/>
    <property type="molecule type" value="Genomic_DNA"/>
</dbReference>
<dbReference type="EMBL" id="AL009126">
    <property type="protein sequence ID" value="CAB15015.1"/>
    <property type="molecule type" value="Genomic_DNA"/>
</dbReference>
<dbReference type="PIR" id="B70001">
    <property type="entry name" value="B70001"/>
</dbReference>
<dbReference type="RefSeq" id="NP_390915.1">
    <property type="nucleotide sequence ID" value="NC_000964.3"/>
</dbReference>
<dbReference type="RefSeq" id="WP_003229139.1">
    <property type="nucleotide sequence ID" value="NZ_OZ025638.1"/>
</dbReference>
<dbReference type="PDB" id="7TCG">
    <property type="method" value="EM"/>
    <property type="resolution" value="3.80 A"/>
    <property type="chains" value="A=1-646"/>
</dbReference>
<dbReference type="PDB" id="7TCH">
    <property type="method" value="EM"/>
    <property type="resolution" value="3.70 A"/>
    <property type="chains" value="A=1-646"/>
</dbReference>
<dbReference type="PDB" id="8G3A">
    <property type="method" value="EM"/>
    <property type="resolution" value="3.40 A"/>
    <property type="chains" value="A=1-646"/>
</dbReference>
<dbReference type="PDB" id="8G3B">
    <property type="method" value="EM"/>
    <property type="resolution" value="3.50 A"/>
    <property type="chains" value="A=1-646"/>
</dbReference>
<dbReference type="PDB" id="8G3F">
    <property type="method" value="EM"/>
    <property type="resolution" value="3.70 A"/>
    <property type="chains" value="A=1-646"/>
</dbReference>
<dbReference type="PDB" id="8G3L">
    <property type="method" value="EM"/>
    <property type="resolution" value="3.50 A"/>
    <property type="chains" value="A=1-646"/>
</dbReference>
<dbReference type="PDB" id="8G4C">
    <property type="method" value="EM"/>
    <property type="resolution" value="3.10 A"/>
    <property type="chains" value="A=1-646"/>
</dbReference>
<dbReference type="PDB" id="8G4D">
    <property type="method" value="EM"/>
    <property type="resolution" value="3.60 A"/>
    <property type="chains" value="A=1-646"/>
</dbReference>
<dbReference type="PDBsum" id="7TCG"/>
<dbReference type="PDBsum" id="7TCH"/>
<dbReference type="PDBsum" id="8G3A"/>
<dbReference type="PDBsum" id="8G3B"/>
<dbReference type="PDBsum" id="8G3F"/>
<dbReference type="PDBsum" id="8G3L"/>
<dbReference type="PDBsum" id="8G4C"/>
<dbReference type="PDBsum" id="8G4D"/>
<dbReference type="EMDB" id="EMD-25811"/>
<dbReference type="EMDB" id="EMD-25812"/>
<dbReference type="EMDB" id="EMD-29690"/>
<dbReference type="EMDB" id="EMD-29691"/>
<dbReference type="EMDB" id="EMD-29694"/>
<dbReference type="EMDB" id="EMD-29701"/>
<dbReference type="EMDB" id="EMD-29716"/>
<dbReference type="EMDB" id="EMD-29717"/>
<dbReference type="SMR" id="O34741"/>
<dbReference type="FunCoup" id="O34741">
    <property type="interactions" value="256"/>
</dbReference>
<dbReference type="STRING" id="224308.BSU30370"/>
<dbReference type="TCDB" id="3.A.1.134.3">
    <property type="family name" value="the atp-binding cassette (abc) superfamily"/>
</dbReference>
<dbReference type="PaxDb" id="224308-BSU30370"/>
<dbReference type="EnsemblBacteria" id="CAB15015">
    <property type="protein sequence ID" value="CAB15015"/>
    <property type="gene ID" value="BSU_30370"/>
</dbReference>
<dbReference type="GeneID" id="938178"/>
<dbReference type="KEGG" id="bsu:BSU30370"/>
<dbReference type="PATRIC" id="fig|224308.179.peg.3294"/>
<dbReference type="eggNOG" id="COG0577">
    <property type="taxonomic scope" value="Bacteria"/>
</dbReference>
<dbReference type="InParanoid" id="O34741"/>
<dbReference type="OrthoDB" id="1705903at2"/>
<dbReference type="PhylomeDB" id="O34741"/>
<dbReference type="BioCyc" id="BSUB:BSU30370-MONOMER"/>
<dbReference type="Proteomes" id="UP000001570">
    <property type="component" value="Chromosome"/>
</dbReference>
<dbReference type="GO" id="GO:0005886">
    <property type="term" value="C:plasma membrane"/>
    <property type="evidence" value="ECO:0007669"/>
    <property type="project" value="UniProtKB-SubCell"/>
</dbReference>
<dbReference type="GO" id="GO:0046677">
    <property type="term" value="P:response to antibiotic"/>
    <property type="evidence" value="ECO:0007669"/>
    <property type="project" value="UniProtKB-KW"/>
</dbReference>
<dbReference type="GO" id="GO:0055085">
    <property type="term" value="P:transmembrane transport"/>
    <property type="evidence" value="ECO:0007669"/>
    <property type="project" value="InterPro"/>
</dbReference>
<dbReference type="InterPro" id="IPR052536">
    <property type="entry name" value="ABC-4_Integral_Memb_Prot"/>
</dbReference>
<dbReference type="InterPro" id="IPR003838">
    <property type="entry name" value="ABC3_permease_C"/>
</dbReference>
<dbReference type="InterPro" id="IPR027022">
    <property type="entry name" value="ABC_permease_BceB-typ"/>
</dbReference>
<dbReference type="PANTHER" id="PTHR46795:SF3">
    <property type="entry name" value="ABC TRANSPORTER PERMEASE"/>
    <property type="match status" value="1"/>
</dbReference>
<dbReference type="PANTHER" id="PTHR46795">
    <property type="entry name" value="ABC TRANSPORTER PERMEASE-RELATED-RELATED"/>
    <property type="match status" value="1"/>
</dbReference>
<dbReference type="Pfam" id="PF02687">
    <property type="entry name" value="FtsX"/>
    <property type="match status" value="1"/>
</dbReference>
<dbReference type="PIRSF" id="PIRSF018968">
    <property type="entry name" value="ABC_permease_BceB"/>
    <property type="match status" value="1"/>
</dbReference>
<keyword id="KW-0002">3D-structure</keyword>
<keyword id="KW-0046">Antibiotic resistance</keyword>
<keyword id="KW-1003">Cell membrane</keyword>
<keyword id="KW-0472">Membrane</keyword>
<keyword id="KW-1185">Reference proteome</keyword>
<keyword id="KW-0812">Transmembrane</keyword>
<keyword id="KW-1133">Transmembrane helix</keyword>
<keyword id="KW-0813">Transport</keyword>
<reference key="1">
    <citation type="journal article" date="1997" name="Microbiology">
        <title>Sequencing and functional annotation of the Bacillus subtilis genes in the 200 kb rrnB-dnaB region.</title>
        <authorList>
            <person name="Lapidus A."/>
            <person name="Galleron N."/>
            <person name="Sorokin A."/>
            <person name="Ehrlich S.D."/>
        </authorList>
    </citation>
    <scope>NUCLEOTIDE SEQUENCE [GENOMIC DNA]</scope>
    <source>
        <strain>168</strain>
    </source>
</reference>
<reference key="2">
    <citation type="journal article" date="1997" name="Nature">
        <title>The complete genome sequence of the Gram-positive bacterium Bacillus subtilis.</title>
        <authorList>
            <person name="Kunst F."/>
            <person name="Ogasawara N."/>
            <person name="Moszer I."/>
            <person name="Albertini A.M."/>
            <person name="Alloni G."/>
            <person name="Azevedo V."/>
            <person name="Bertero M.G."/>
            <person name="Bessieres P."/>
            <person name="Bolotin A."/>
            <person name="Borchert S."/>
            <person name="Borriss R."/>
            <person name="Boursier L."/>
            <person name="Brans A."/>
            <person name="Braun M."/>
            <person name="Brignell S.C."/>
            <person name="Bron S."/>
            <person name="Brouillet S."/>
            <person name="Bruschi C.V."/>
            <person name="Caldwell B."/>
            <person name="Capuano V."/>
            <person name="Carter N.M."/>
            <person name="Choi S.-K."/>
            <person name="Codani J.-J."/>
            <person name="Connerton I.F."/>
            <person name="Cummings N.J."/>
            <person name="Daniel R.A."/>
            <person name="Denizot F."/>
            <person name="Devine K.M."/>
            <person name="Duesterhoeft A."/>
            <person name="Ehrlich S.D."/>
            <person name="Emmerson P.T."/>
            <person name="Entian K.-D."/>
            <person name="Errington J."/>
            <person name="Fabret C."/>
            <person name="Ferrari E."/>
            <person name="Foulger D."/>
            <person name="Fritz C."/>
            <person name="Fujita M."/>
            <person name="Fujita Y."/>
            <person name="Fuma S."/>
            <person name="Galizzi A."/>
            <person name="Galleron N."/>
            <person name="Ghim S.-Y."/>
            <person name="Glaser P."/>
            <person name="Goffeau A."/>
            <person name="Golightly E.J."/>
            <person name="Grandi G."/>
            <person name="Guiseppi G."/>
            <person name="Guy B.J."/>
            <person name="Haga K."/>
            <person name="Haiech J."/>
            <person name="Harwood C.R."/>
            <person name="Henaut A."/>
            <person name="Hilbert H."/>
            <person name="Holsappel S."/>
            <person name="Hosono S."/>
            <person name="Hullo M.-F."/>
            <person name="Itaya M."/>
            <person name="Jones L.-M."/>
            <person name="Joris B."/>
            <person name="Karamata D."/>
            <person name="Kasahara Y."/>
            <person name="Klaerr-Blanchard M."/>
            <person name="Klein C."/>
            <person name="Kobayashi Y."/>
            <person name="Koetter P."/>
            <person name="Koningstein G."/>
            <person name="Krogh S."/>
            <person name="Kumano M."/>
            <person name="Kurita K."/>
            <person name="Lapidus A."/>
            <person name="Lardinois S."/>
            <person name="Lauber J."/>
            <person name="Lazarevic V."/>
            <person name="Lee S.-M."/>
            <person name="Levine A."/>
            <person name="Liu H."/>
            <person name="Masuda S."/>
            <person name="Mauel C."/>
            <person name="Medigue C."/>
            <person name="Medina N."/>
            <person name="Mellado R.P."/>
            <person name="Mizuno M."/>
            <person name="Moestl D."/>
            <person name="Nakai S."/>
            <person name="Noback M."/>
            <person name="Noone D."/>
            <person name="O'Reilly M."/>
            <person name="Ogawa K."/>
            <person name="Ogiwara A."/>
            <person name="Oudega B."/>
            <person name="Park S.-H."/>
            <person name="Parro V."/>
            <person name="Pohl T.M."/>
            <person name="Portetelle D."/>
            <person name="Porwollik S."/>
            <person name="Prescott A.M."/>
            <person name="Presecan E."/>
            <person name="Pujic P."/>
            <person name="Purnelle B."/>
            <person name="Rapoport G."/>
            <person name="Rey M."/>
            <person name="Reynolds S."/>
            <person name="Rieger M."/>
            <person name="Rivolta C."/>
            <person name="Rocha E."/>
            <person name="Roche B."/>
            <person name="Rose M."/>
            <person name="Sadaie Y."/>
            <person name="Sato T."/>
            <person name="Scanlan E."/>
            <person name="Schleich S."/>
            <person name="Schroeter R."/>
            <person name="Scoffone F."/>
            <person name="Sekiguchi J."/>
            <person name="Sekowska A."/>
            <person name="Seror S.J."/>
            <person name="Serror P."/>
            <person name="Shin B.-S."/>
            <person name="Soldo B."/>
            <person name="Sorokin A."/>
            <person name="Tacconi E."/>
            <person name="Takagi T."/>
            <person name="Takahashi H."/>
            <person name="Takemaru K."/>
            <person name="Takeuchi M."/>
            <person name="Tamakoshi A."/>
            <person name="Tanaka T."/>
            <person name="Terpstra P."/>
            <person name="Tognoni A."/>
            <person name="Tosato V."/>
            <person name="Uchiyama S."/>
            <person name="Vandenbol M."/>
            <person name="Vannier F."/>
            <person name="Vassarotti A."/>
            <person name="Viari A."/>
            <person name="Wambutt R."/>
            <person name="Wedler E."/>
            <person name="Wedler H."/>
            <person name="Weitzenegger T."/>
            <person name="Winters P."/>
            <person name="Wipat A."/>
            <person name="Yamamoto H."/>
            <person name="Yamane K."/>
            <person name="Yasumoto K."/>
            <person name="Yata K."/>
            <person name="Yoshida K."/>
            <person name="Yoshikawa H.-F."/>
            <person name="Zumstein E."/>
            <person name="Yoshikawa H."/>
            <person name="Danchin A."/>
        </authorList>
    </citation>
    <scope>NUCLEOTIDE SEQUENCE [LARGE SCALE GENOMIC DNA]</scope>
    <source>
        <strain>168</strain>
    </source>
</reference>
<reference key="3">
    <citation type="journal article" date="2003" name="FEMS Microbiol. Lett.">
        <title>YtsCD and YwoA, two independent systems that confer bacitracin resistance to Bacillus subtilis.</title>
        <authorList>
            <person name="Bernard R."/>
            <person name="Joseph P."/>
            <person name="Guiseppi A."/>
            <person name="Chippaux M."/>
            <person name="Denizot F."/>
        </authorList>
    </citation>
    <scope>INDUCTION</scope>
    <scope>PROBABLE FUNCTION</scope>
    <source>
        <strain>168</strain>
    </source>
</reference>
<reference key="4">
    <citation type="journal article" date="2003" name="Mol. Microbiol.">
        <title>The BceRS two-component regulatory system induces expression of the bacitracin transporter, BceAB, in Bacillus subtilis.</title>
        <authorList>
            <person name="Ohki R."/>
            <person name="Giyanto X."/>
            <person name="Tateno K."/>
            <person name="Masuyama W."/>
            <person name="Moriya S."/>
            <person name="Kobayashi K."/>
            <person name="Ogasawara N."/>
        </authorList>
    </citation>
    <scope>INDUCTION</scope>
    <scope>PROBABLE FUNCTION</scope>
    <source>
        <strain>168</strain>
    </source>
</reference>
<reference key="5">
    <citation type="journal article" date="2003" name="Mol. Microbiol.">
        <title>Cell wall stress responses in Bacillus subtilis: the regulatory network of the bacitracin stimulon.</title>
        <authorList>
            <person name="Mascher T."/>
            <person name="Margulis N.G."/>
            <person name="Wang T."/>
            <person name="Ye R.W."/>
            <person name="Helmann J.D."/>
        </authorList>
    </citation>
    <scope>INDUCTION</scope>
    <source>
        <strain>168 / CU1065</strain>
    </source>
</reference>
<evidence type="ECO:0000255" key="1"/>
<evidence type="ECO:0000269" key="2">
    <source>
    </source>
</evidence>
<evidence type="ECO:0000269" key="3">
    <source>
    </source>
</evidence>
<evidence type="ECO:0000269" key="4">
    <source>
    </source>
</evidence>
<evidence type="ECO:0000305" key="5"/>
<evidence type="ECO:0007829" key="6">
    <source>
        <dbReference type="PDB" id="8G3A"/>
    </source>
</evidence>
<evidence type="ECO:0007829" key="7">
    <source>
        <dbReference type="PDB" id="8G3B"/>
    </source>
</evidence>
<evidence type="ECO:0007829" key="8">
    <source>
        <dbReference type="PDB" id="8G3L"/>
    </source>
</evidence>
<evidence type="ECO:0007829" key="9">
    <source>
        <dbReference type="PDB" id="8G4C"/>
    </source>
</evidence>
<proteinExistence type="evidence at protein level"/>
<comment type="function">
    <text>Part of the ABC transporter complex BceAB (TC 3.A.1.123.5) involved in bacitracin export.</text>
</comment>
<comment type="subunit">
    <text evidence="5">The complex is composed of two ATP-binding proteins (BceA) and two transmembrane proteins (BceB).</text>
</comment>
<comment type="subcellular location">
    <subcellularLocation>
        <location evidence="5">Cell membrane</location>
        <topology evidence="5">Multi-pass membrane protein</topology>
    </subcellularLocation>
</comment>
<comment type="induction">
    <text evidence="2 3 4">Expression is induced by bacitracin, via the two-component regulatory system BceS/BceR.</text>
</comment>
<comment type="similarity">
    <text evidence="5">Belongs to the ABC-4 integral membrane protein family.</text>
</comment>
<gene>
    <name type="primary">bceB</name>
    <name type="synonym">barD</name>
    <name type="synonym">ytsD</name>
    <name type="ordered locus">BSU30370</name>
</gene>
<protein>
    <recommendedName>
        <fullName>Bacitracin export permease protein BceB</fullName>
    </recommendedName>
</protein>